<reference key="1">
    <citation type="journal article" date="2007" name="Science">
        <title>The Calyptogena magnifica chemoautotrophic symbiont genome.</title>
        <authorList>
            <person name="Newton I.L.G."/>
            <person name="Woyke T."/>
            <person name="Auchtung T.A."/>
            <person name="Dilly G.F."/>
            <person name="Dutton R.J."/>
            <person name="Fisher M.C."/>
            <person name="Fontanez K.M."/>
            <person name="Lau E."/>
            <person name="Stewart F.J."/>
            <person name="Richardson P.M."/>
            <person name="Barry K.W."/>
            <person name="Saunders E."/>
            <person name="Detter J.C."/>
            <person name="Wu D."/>
            <person name="Eisen J.A."/>
            <person name="Cavanaugh C.M."/>
        </authorList>
    </citation>
    <scope>NUCLEOTIDE SEQUENCE [LARGE SCALE GENOMIC DNA]</scope>
</reference>
<comment type="function">
    <text evidence="1">Cleaves peptides in various proteins in a process that requires ATP hydrolysis. Has a chymotrypsin-like activity. Plays a major role in the degradation of misfolded proteins.</text>
</comment>
<comment type="catalytic activity">
    <reaction evidence="1">
        <text>Hydrolysis of proteins to small peptides in the presence of ATP and magnesium. alpha-casein is the usual test substrate. In the absence of ATP, only oligopeptides shorter than five residues are hydrolyzed (such as succinyl-Leu-Tyr-|-NHMec, and Leu-Tyr-Leu-|-Tyr-Trp, in which cleavage of the -Tyr-|-Leu- and -Tyr-|-Trp bonds also occurs).</text>
        <dbReference type="EC" id="3.4.21.92"/>
    </reaction>
</comment>
<comment type="subunit">
    <text evidence="1">Fourteen ClpP subunits assemble into 2 heptameric rings which stack back to back to give a disk-like structure with a central cavity, resembling the structure of eukaryotic proteasomes.</text>
</comment>
<comment type="subcellular location">
    <subcellularLocation>
        <location evidence="1">Cytoplasm</location>
    </subcellularLocation>
</comment>
<comment type="similarity">
    <text evidence="1">Belongs to the peptidase S14 family.</text>
</comment>
<sequence length="198" mass="22049">MDIENLNQIPIVVEQSARGERAYDIYSRLLKERIIFLVGPIEDYMANVVVAQLLFLESENPDQDIHLYINSPGGLVSAGLAIYDTMQFIKPDVSTLCIGQAASMGALLLTAGAKDKRFALPNVRCMIHQPLGGFSGQASDIDIHAQEILKVREKLNQIFKLHTSQTIKTIQKDTDRDNFMSANEATKYGLIDKVLAKR</sequence>
<proteinExistence type="inferred from homology"/>
<keyword id="KW-0963">Cytoplasm</keyword>
<keyword id="KW-0378">Hydrolase</keyword>
<keyword id="KW-0645">Protease</keyword>
<keyword id="KW-0720">Serine protease</keyword>
<feature type="chain" id="PRO_1000026124" description="ATP-dependent Clp protease proteolytic subunit">
    <location>
        <begin position="1"/>
        <end position="198"/>
    </location>
</feature>
<feature type="active site" description="Nucleophile" evidence="1">
    <location>
        <position position="103"/>
    </location>
</feature>
<feature type="active site" evidence="1">
    <location>
        <position position="128"/>
    </location>
</feature>
<accession>A1AVN6</accession>
<dbReference type="EC" id="3.4.21.92" evidence="1"/>
<dbReference type="EMBL" id="CP000488">
    <property type="protein sequence ID" value="ABL01993.1"/>
    <property type="molecule type" value="Genomic_DNA"/>
</dbReference>
<dbReference type="RefSeq" id="WP_011737618.1">
    <property type="nucleotide sequence ID" value="NC_008610.1"/>
</dbReference>
<dbReference type="SMR" id="A1AVN6"/>
<dbReference type="STRING" id="413404.Rmag_0205"/>
<dbReference type="MEROPS" id="S14.001"/>
<dbReference type="KEGG" id="rma:Rmag_0205"/>
<dbReference type="eggNOG" id="COG0740">
    <property type="taxonomic scope" value="Bacteria"/>
</dbReference>
<dbReference type="HOGENOM" id="CLU_058707_3_2_6"/>
<dbReference type="OrthoDB" id="9802800at2"/>
<dbReference type="Proteomes" id="UP000002587">
    <property type="component" value="Chromosome"/>
</dbReference>
<dbReference type="GO" id="GO:0005737">
    <property type="term" value="C:cytoplasm"/>
    <property type="evidence" value="ECO:0007669"/>
    <property type="project" value="UniProtKB-SubCell"/>
</dbReference>
<dbReference type="GO" id="GO:0009368">
    <property type="term" value="C:endopeptidase Clp complex"/>
    <property type="evidence" value="ECO:0007669"/>
    <property type="project" value="TreeGrafter"/>
</dbReference>
<dbReference type="GO" id="GO:0004176">
    <property type="term" value="F:ATP-dependent peptidase activity"/>
    <property type="evidence" value="ECO:0007669"/>
    <property type="project" value="InterPro"/>
</dbReference>
<dbReference type="GO" id="GO:0051117">
    <property type="term" value="F:ATPase binding"/>
    <property type="evidence" value="ECO:0007669"/>
    <property type="project" value="TreeGrafter"/>
</dbReference>
<dbReference type="GO" id="GO:0004252">
    <property type="term" value="F:serine-type endopeptidase activity"/>
    <property type="evidence" value="ECO:0007669"/>
    <property type="project" value="UniProtKB-UniRule"/>
</dbReference>
<dbReference type="GO" id="GO:0006515">
    <property type="term" value="P:protein quality control for misfolded or incompletely synthesized proteins"/>
    <property type="evidence" value="ECO:0007669"/>
    <property type="project" value="TreeGrafter"/>
</dbReference>
<dbReference type="CDD" id="cd07017">
    <property type="entry name" value="S14_ClpP_2"/>
    <property type="match status" value="1"/>
</dbReference>
<dbReference type="FunFam" id="3.90.226.10:FF:000001">
    <property type="entry name" value="ATP-dependent Clp protease proteolytic subunit"/>
    <property type="match status" value="1"/>
</dbReference>
<dbReference type="Gene3D" id="3.90.226.10">
    <property type="entry name" value="2-enoyl-CoA Hydratase, Chain A, domain 1"/>
    <property type="match status" value="1"/>
</dbReference>
<dbReference type="HAMAP" id="MF_00444">
    <property type="entry name" value="ClpP"/>
    <property type="match status" value="1"/>
</dbReference>
<dbReference type="InterPro" id="IPR001907">
    <property type="entry name" value="ClpP"/>
</dbReference>
<dbReference type="InterPro" id="IPR029045">
    <property type="entry name" value="ClpP/crotonase-like_dom_sf"/>
</dbReference>
<dbReference type="InterPro" id="IPR023562">
    <property type="entry name" value="ClpP/TepA"/>
</dbReference>
<dbReference type="InterPro" id="IPR018215">
    <property type="entry name" value="ClpP_Ser_AS"/>
</dbReference>
<dbReference type="NCBIfam" id="TIGR00493">
    <property type="entry name" value="clpP"/>
    <property type="match status" value="1"/>
</dbReference>
<dbReference type="NCBIfam" id="NF001368">
    <property type="entry name" value="PRK00277.1"/>
    <property type="match status" value="1"/>
</dbReference>
<dbReference type="NCBIfam" id="NF009205">
    <property type="entry name" value="PRK12553.1"/>
    <property type="match status" value="1"/>
</dbReference>
<dbReference type="PANTHER" id="PTHR10381">
    <property type="entry name" value="ATP-DEPENDENT CLP PROTEASE PROTEOLYTIC SUBUNIT"/>
    <property type="match status" value="1"/>
</dbReference>
<dbReference type="PANTHER" id="PTHR10381:SF70">
    <property type="entry name" value="ATP-DEPENDENT CLP PROTEASE PROTEOLYTIC SUBUNIT"/>
    <property type="match status" value="1"/>
</dbReference>
<dbReference type="Pfam" id="PF00574">
    <property type="entry name" value="CLP_protease"/>
    <property type="match status" value="1"/>
</dbReference>
<dbReference type="PRINTS" id="PR00127">
    <property type="entry name" value="CLPPROTEASEP"/>
</dbReference>
<dbReference type="SUPFAM" id="SSF52096">
    <property type="entry name" value="ClpP/crotonase"/>
    <property type="match status" value="1"/>
</dbReference>
<dbReference type="PROSITE" id="PS00381">
    <property type="entry name" value="CLP_PROTEASE_SER"/>
    <property type="match status" value="1"/>
</dbReference>
<name>CLPP_RUTMC</name>
<protein>
    <recommendedName>
        <fullName evidence="1">ATP-dependent Clp protease proteolytic subunit</fullName>
        <ecNumber evidence="1">3.4.21.92</ecNumber>
    </recommendedName>
    <alternativeName>
        <fullName evidence="1">Endopeptidase Clp</fullName>
    </alternativeName>
</protein>
<evidence type="ECO:0000255" key="1">
    <source>
        <dbReference type="HAMAP-Rule" id="MF_00444"/>
    </source>
</evidence>
<organism>
    <name type="scientific">Ruthia magnifica subsp. Calyptogena magnifica</name>
    <dbReference type="NCBI Taxonomy" id="413404"/>
    <lineage>
        <taxon>Bacteria</taxon>
        <taxon>Pseudomonadati</taxon>
        <taxon>Pseudomonadota</taxon>
        <taxon>Gammaproteobacteria</taxon>
        <taxon>Candidatus Pseudothioglobaceae</taxon>
        <taxon>Candidatus Ruthturnera</taxon>
    </lineage>
</organism>
<gene>
    <name evidence="1" type="primary">clpP</name>
    <name type="ordered locus">Rmag_0205</name>
</gene>